<reference key="1">
    <citation type="submission" date="2007-11" db="EMBL/GenBank/DDBJ databases">
        <authorList>
            <consortium name="The Salmonella enterica serovar Paratyphi B Genome Sequencing Project"/>
            <person name="McClelland M."/>
            <person name="Sanderson E.K."/>
            <person name="Porwollik S."/>
            <person name="Spieth J."/>
            <person name="Clifton W.S."/>
            <person name="Fulton R."/>
            <person name="Cordes M."/>
            <person name="Wollam A."/>
            <person name="Shah N."/>
            <person name="Pepin K."/>
            <person name="Bhonagiri V."/>
            <person name="Nash W."/>
            <person name="Johnson M."/>
            <person name="Thiruvilangam P."/>
            <person name="Wilson R."/>
        </authorList>
    </citation>
    <scope>NUCLEOTIDE SEQUENCE [LARGE SCALE GENOMIC DNA]</scope>
    <source>
        <strain>ATCC BAA-1250 / SPB7</strain>
    </source>
</reference>
<sequence>MISYYFQGVALGAAMILPLGPQNAFVMNQGIRRQYHLMIALLCALSDLVLISAGIFGGSALLMQSPWLLALVTWGGVAFLLWYGFGALKTAMSSNLELASAEVMKQGRWKIIATMLAVTWLNPHVYLDTFVVLGSLGGQLAMEPKRWFALGTISASFLWFFGLALLAAWLAPRLRTAKAQRIINILVGVVMWLIAFQLAREGVAHMHALFN</sequence>
<feature type="chain" id="PRO_1000088469" description="Arginine exporter protein ArgO">
    <location>
        <begin position="1"/>
        <end position="211"/>
    </location>
</feature>
<feature type="transmembrane region" description="Helical" evidence="1">
    <location>
        <begin position="1"/>
        <end position="21"/>
    </location>
</feature>
<feature type="transmembrane region" description="Helical" evidence="1">
    <location>
        <begin position="37"/>
        <end position="57"/>
    </location>
</feature>
<feature type="transmembrane region" description="Helical" evidence="1">
    <location>
        <begin position="68"/>
        <end position="88"/>
    </location>
</feature>
<feature type="transmembrane region" description="Helical" evidence="1">
    <location>
        <begin position="111"/>
        <end position="131"/>
    </location>
</feature>
<feature type="transmembrane region" description="Helical" evidence="1">
    <location>
        <begin position="147"/>
        <end position="167"/>
    </location>
</feature>
<feature type="transmembrane region" description="Helical" evidence="1">
    <location>
        <begin position="179"/>
        <end position="199"/>
    </location>
</feature>
<name>ARGO_SALPB</name>
<comment type="function">
    <text evidence="1">Involved in the export of arginine. Important to control the intracellular level of arginine and the correct balance between arginine and lysine.</text>
</comment>
<comment type="catalytic activity">
    <reaction evidence="1">
        <text>L-arginine(in) = L-arginine(out)</text>
        <dbReference type="Rhea" id="RHEA:32143"/>
        <dbReference type="ChEBI" id="CHEBI:32682"/>
    </reaction>
    <physiologicalReaction direction="left-to-right" evidence="1">
        <dbReference type="Rhea" id="RHEA:32144"/>
    </physiologicalReaction>
</comment>
<comment type="subcellular location">
    <subcellularLocation>
        <location evidence="1">Cell inner membrane</location>
        <topology evidence="1">Multi-pass membrane protein</topology>
    </subcellularLocation>
</comment>
<comment type="similarity">
    <text evidence="1">Belongs to the LysE/ArgO transporter (TC 2.A.75) family.</text>
</comment>
<keyword id="KW-0029">Amino-acid transport</keyword>
<keyword id="KW-0997">Cell inner membrane</keyword>
<keyword id="KW-1003">Cell membrane</keyword>
<keyword id="KW-0472">Membrane</keyword>
<keyword id="KW-0812">Transmembrane</keyword>
<keyword id="KW-1133">Transmembrane helix</keyword>
<keyword id="KW-0813">Transport</keyword>
<evidence type="ECO:0000255" key="1">
    <source>
        <dbReference type="HAMAP-Rule" id="MF_01901"/>
    </source>
</evidence>
<gene>
    <name evidence="1" type="primary">argO</name>
    <name type="ordered locus">SPAB_03824</name>
</gene>
<accession>A9N3Q1</accession>
<proteinExistence type="inferred from homology"/>
<organism>
    <name type="scientific">Salmonella paratyphi B (strain ATCC BAA-1250 / SPB7)</name>
    <dbReference type="NCBI Taxonomy" id="1016998"/>
    <lineage>
        <taxon>Bacteria</taxon>
        <taxon>Pseudomonadati</taxon>
        <taxon>Pseudomonadota</taxon>
        <taxon>Gammaproteobacteria</taxon>
        <taxon>Enterobacterales</taxon>
        <taxon>Enterobacteriaceae</taxon>
        <taxon>Salmonella</taxon>
    </lineage>
</organism>
<dbReference type="EMBL" id="CP000886">
    <property type="protein sequence ID" value="ABX69155.1"/>
    <property type="molecule type" value="Genomic_DNA"/>
</dbReference>
<dbReference type="RefSeq" id="WP_000626880.1">
    <property type="nucleotide sequence ID" value="NC_010102.1"/>
</dbReference>
<dbReference type="KEGG" id="spq:SPAB_03824"/>
<dbReference type="PATRIC" id="fig|1016998.12.peg.3602"/>
<dbReference type="HOGENOM" id="CLU_087840_0_1_6"/>
<dbReference type="BioCyc" id="SENT1016998:SPAB_RS15540-MONOMER"/>
<dbReference type="Proteomes" id="UP000008556">
    <property type="component" value="Chromosome"/>
</dbReference>
<dbReference type="GO" id="GO:0005886">
    <property type="term" value="C:plasma membrane"/>
    <property type="evidence" value="ECO:0007669"/>
    <property type="project" value="UniProtKB-SubCell"/>
</dbReference>
<dbReference type="GO" id="GO:0061459">
    <property type="term" value="F:L-arginine transmembrane transporter activity"/>
    <property type="evidence" value="ECO:0007669"/>
    <property type="project" value="UniProtKB-UniRule"/>
</dbReference>
<dbReference type="HAMAP" id="MF_01901">
    <property type="entry name" value="ArgO"/>
    <property type="match status" value="1"/>
</dbReference>
<dbReference type="InterPro" id="IPR023445">
    <property type="entry name" value="Arg_export_ArgO_enterobac"/>
</dbReference>
<dbReference type="InterPro" id="IPR001123">
    <property type="entry name" value="LeuE-type"/>
</dbReference>
<dbReference type="InterPro" id="IPR004777">
    <property type="entry name" value="Lys/arg_exporter"/>
</dbReference>
<dbReference type="NCBIfam" id="TIGR00948">
    <property type="entry name" value="2a75"/>
    <property type="match status" value="1"/>
</dbReference>
<dbReference type="NCBIfam" id="NF006801">
    <property type="entry name" value="PRK09304.1"/>
    <property type="match status" value="1"/>
</dbReference>
<dbReference type="PANTHER" id="PTHR30086">
    <property type="entry name" value="ARGININE EXPORTER PROTEIN ARGO"/>
    <property type="match status" value="1"/>
</dbReference>
<dbReference type="PANTHER" id="PTHR30086:SF20">
    <property type="entry name" value="ARGININE EXPORTER PROTEIN ARGO-RELATED"/>
    <property type="match status" value="1"/>
</dbReference>
<dbReference type="Pfam" id="PF01810">
    <property type="entry name" value="LysE"/>
    <property type="match status" value="1"/>
</dbReference>
<protein>
    <recommendedName>
        <fullName evidence="1">Arginine exporter protein ArgO</fullName>
    </recommendedName>
</protein>